<sequence length="93" mass="10634">MSEATVNDKKKKGIQKVRIGYVVSDKMQKTIVVELEDRNQHALYGKTIRTTSKVKVHDENETAGVGDRVRIEECRPLSANKHFRLVEILEKAK</sequence>
<organism>
    <name type="scientific">Corynebacterium kroppenstedtii (strain DSM 44385 / JCM 11950 / CIP 105744 / CCUG 35717)</name>
    <dbReference type="NCBI Taxonomy" id="645127"/>
    <lineage>
        <taxon>Bacteria</taxon>
        <taxon>Bacillati</taxon>
        <taxon>Actinomycetota</taxon>
        <taxon>Actinomycetes</taxon>
        <taxon>Mycobacteriales</taxon>
        <taxon>Corynebacteriaceae</taxon>
        <taxon>Corynebacterium</taxon>
    </lineage>
</organism>
<reference key="1">
    <citation type="journal article" date="2008" name="J. Biotechnol.">
        <title>Ultrafast pyrosequencing of Corynebacterium kroppenstedtii DSM44385 revealed insights into the physiology of a lipophilic corynebacterium that lacks mycolic acids.</title>
        <authorList>
            <person name="Tauch A."/>
            <person name="Schneider J."/>
            <person name="Szczepanowski R."/>
            <person name="Tilker A."/>
            <person name="Viehoever P."/>
            <person name="Gartemann K.-H."/>
            <person name="Arnold W."/>
            <person name="Blom J."/>
            <person name="Brinkrolf K."/>
            <person name="Brune I."/>
            <person name="Goetker S."/>
            <person name="Weisshaar B."/>
            <person name="Goesmann A."/>
            <person name="Droege M."/>
            <person name="Puehler A."/>
        </authorList>
    </citation>
    <scope>NUCLEOTIDE SEQUENCE [LARGE SCALE GENOMIC DNA]</scope>
    <source>
        <strain>DSM 44385 / JCM 11950 / CIP 105744 / CCUG 35717</strain>
    </source>
</reference>
<keyword id="KW-1185">Reference proteome</keyword>
<keyword id="KW-0687">Ribonucleoprotein</keyword>
<keyword id="KW-0689">Ribosomal protein</keyword>
<keyword id="KW-0694">RNA-binding</keyword>
<keyword id="KW-0699">rRNA-binding</keyword>
<protein>
    <recommendedName>
        <fullName evidence="1">Small ribosomal subunit protein uS17</fullName>
    </recommendedName>
    <alternativeName>
        <fullName evidence="2">30S ribosomal protein S17</fullName>
    </alternativeName>
</protein>
<accession>C4LL43</accession>
<name>RS17_CORK4</name>
<proteinExistence type="inferred from homology"/>
<evidence type="ECO:0000255" key="1">
    <source>
        <dbReference type="HAMAP-Rule" id="MF_01345"/>
    </source>
</evidence>
<evidence type="ECO:0000305" key="2"/>
<comment type="function">
    <text evidence="1">One of the primary rRNA binding proteins, it binds specifically to the 5'-end of 16S ribosomal RNA.</text>
</comment>
<comment type="subunit">
    <text evidence="1">Part of the 30S ribosomal subunit.</text>
</comment>
<comment type="similarity">
    <text evidence="1">Belongs to the universal ribosomal protein uS17 family.</text>
</comment>
<dbReference type="EMBL" id="CP001620">
    <property type="protein sequence ID" value="ACR18548.1"/>
    <property type="molecule type" value="Genomic_DNA"/>
</dbReference>
<dbReference type="RefSeq" id="WP_012732435.1">
    <property type="nucleotide sequence ID" value="NC_012704.1"/>
</dbReference>
<dbReference type="SMR" id="C4LL43"/>
<dbReference type="STRING" id="645127.ckrop_1828"/>
<dbReference type="GeneID" id="92726625"/>
<dbReference type="KEGG" id="ckp:ckrop_1828"/>
<dbReference type="eggNOG" id="COG0186">
    <property type="taxonomic scope" value="Bacteria"/>
</dbReference>
<dbReference type="HOGENOM" id="CLU_073626_1_0_11"/>
<dbReference type="OrthoDB" id="9811714at2"/>
<dbReference type="Proteomes" id="UP000001473">
    <property type="component" value="Chromosome"/>
</dbReference>
<dbReference type="GO" id="GO:0022627">
    <property type="term" value="C:cytosolic small ribosomal subunit"/>
    <property type="evidence" value="ECO:0007669"/>
    <property type="project" value="TreeGrafter"/>
</dbReference>
<dbReference type="GO" id="GO:0019843">
    <property type="term" value="F:rRNA binding"/>
    <property type="evidence" value="ECO:0007669"/>
    <property type="project" value="UniProtKB-UniRule"/>
</dbReference>
<dbReference type="GO" id="GO:0003735">
    <property type="term" value="F:structural constituent of ribosome"/>
    <property type="evidence" value="ECO:0007669"/>
    <property type="project" value="InterPro"/>
</dbReference>
<dbReference type="GO" id="GO:0006412">
    <property type="term" value="P:translation"/>
    <property type="evidence" value="ECO:0007669"/>
    <property type="project" value="UniProtKB-UniRule"/>
</dbReference>
<dbReference type="CDD" id="cd00364">
    <property type="entry name" value="Ribosomal_uS17"/>
    <property type="match status" value="1"/>
</dbReference>
<dbReference type="Gene3D" id="2.40.50.140">
    <property type="entry name" value="Nucleic acid-binding proteins"/>
    <property type="match status" value="1"/>
</dbReference>
<dbReference type="HAMAP" id="MF_01345_B">
    <property type="entry name" value="Ribosomal_uS17_B"/>
    <property type="match status" value="1"/>
</dbReference>
<dbReference type="InterPro" id="IPR012340">
    <property type="entry name" value="NA-bd_OB-fold"/>
</dbReference>
<dbReference type="InterPro" id="IPR000266">
    <property type="entry name" value="Ribosomal_uS17"/>
</dbReference>
<dbReference type="InterPro" id="IPR019984">
    <property type="entry name" value="Ribosomal_uS17_bact/chlr"/>
</dbReference>
<dbReference type="InterPro" id="IPR019979">
    <property type="entry name" value="Ribosomal_uS17_CS"/>
</dbReference>
<dbReference type="NCBIfam" id="NF004123">
    <property type="entry name" value="PRK05610.1"/>
    <property type="match status" value="1"/>
</dbReference>
<dbReference type="NCBIfam" id="TIGR03635">
    <property type="entry name" value="uS17_bact"/>
    <property type="match status" value="1"/>
</dbReference>
<dbReference type="PANTHER" id="PTHR10744">
    <property type="entry name" value="40S RIBOSOMAL PROTEIN S11 FAMILY MEMBER"/>
    <property type="match status" value="1"/>
</dbReference>
<dbReference type="PANTHER" id="PTHR10744:SF1">
    <property type="entry name" value="SMALL RIBOSOMAL SUBUNIT PROTEIN US17M"/>
    <property type="match status" value="1"/>
</dbReference>
<dbReference type="Pfam" id="PF00366">
    <property type="entry name" value="Ribosomal_S17"/>
    <property type="match status" value="1"/>
</dbReference>
<dbReference type="PRINTS" id="PR00973">
    <property type="entry name" value="RIBOSOMALS17"/>
</dbReference>
<dbReference type="SUPFAM" id="SSF50249">
    <property type="entry name" value="Nucleic acid-binding proteins"/>
    <property type="match status" value="1"/>
</dbReference>
<dbReference type="PROSITE" id="PS00056">
    <property type="entry name" value="RIBOSOMAL_S17"/>
    <property type="match status" value="1"/>
</dbReference>
<feature type="chain" id="PRO_1000214778" description="Small ribosomal subunit protein uS17">
    <location>
        <begin position="1"/>
        <end position="93"/>
    </location>
</feature>
<gene>
    <name evidence="1" type="primary">rpsQ</name>
    <name type="ordered locus">ckrop_1828</name>
</gene>